<sequence length="235" mass="25733">MGDSQYSFSLTTFSPSGKLVQIEHALTAVGSGQTSLGIKASNGVVIATEKKLPSILVDEASVQKIQHLTPNIGTVYSGMGPDFRVLVRKSRKQAEQYLRLYKEPIPVTQLVRETATVMQEFTQSGGVRPFGVSLLVAGYDDKGPQLYQVDPSGSYFSWKASAMGKNVSNAKTFLEKRYTEDMELDDAIHTAILTLKEGFEGEISSKNIEIGKIGTDKVFRVLTPAEIDDYLAEVE</sequence>
<protein>
    <recommendedName>
        <fullName>Proteasome subunit alpha type-2-B</fullName>
    </recommendedName>
    <alternativeName>
        <fullName>20S proteasome alpha subunit B-2</fullName>
    </alternativeName>
</protein>
<keyword id="KW-0963">Cytoplasm</keyword>
<keyword id="KW-1017">Isopeptide bond</keyword>
<keyword id="KW-0539">Nucleus</keyword>
<keyword id="KW-0647">Proteasome</keyword>
<keyword id="KW-1185">Reference proteome</keyword>
<keyword id="KW-0832">Ubl conjugation</keyword>
<proteinExistence type="evidence at protein level"/>
<feature type="chain" id="PRO_0000124086" description="Proteasome subunit alpha type-2-B">
    <location>
        <begin position="1"/>
        <end position="235"/>
    </location>
</feature>
<feature type="cross-link" description="Glycyl lysine isopeptide (Lys-Gly) (interchain with G-Cter in ubiquitin)" evidence="2">
    <location>
        <position position="64"/>
    </location>
</feature>
<evidence type="ECO:0000250" key="1"/>
<evidence type="ECO:0000250" key="2">
    <source>
        <dbReference type="UniProtKB" id="O81149"/>
    </source>
</evidence>
<evidence type="ECO:0000255" key="3">
    <source>
        <dbReference type="PROSITE-ProRule" id="PRU00808"/>
    </source>
</evidence>
<evidence type="ECO:0000269" key="4">
    <source>
    </source>
</evidence>
<evidence type="ECO:0000269" key="5">
    <source>
    </source>
</evidence>
<evidence type="ECO:0000269" key="6">
    <source>
    </source>
</evidence>
<evidence type="ECO:0000305" key="7"/>
<name>PSA2B_ARATH</name>
<dbReference type="EMBL" id="AC002986">
    <property type="protein sequence ID" value="AAC17043.1"/>
    <property type="status" value="ALT_SEQ"/>
    <property type="molecule type" value="Genomic_DNA"/>
</dbReference>
<dbReference type="EMBL" id="CP002684">
    <property type="protein sequence ID" value="AEE36215.1"/>
    <property type="molecule type" value="Genomic_DNA"/>
</dbReference>
<dbReference type="EMBL" id="CP002684">
    <property type="protein sequence ID" value="AEE36216.1"/>
    <property type="molecule type" value="Genomic_DNA"/>
</dbReference>
<dbReference type="EMBL" id="CP002684">
    <property type="protein sequence ID" value="AEE36217.1"/>
    <property type="molecule type" value="Genomic_DNA"/>
</dbReference>
<dbReference type="EMBL" id="AY094433">
    <property type="protein sequence ID" value="AAM19806.1"/>
    <property type="molecule type" value="mRNA"/>
</dbReference>
<dbReference type="EMBL" id="AY122893">
    <property type="protein sequence ID" value="AAM67426.1"/>
    <property type="molecule type" value="mRNA"/>
</dbReference>
<dbReference type="PIR" id="T01036">
    <property type="entry name" value="T01036"/>
</dbReference>
<dbReference type="RefSeq" id="NP_001077845.1">
    <property type="nucleotide sequence ID" value="NM_001084376.1"/>
</dbReference>
<dbReference type="RefSeq" id="NP_001077846.1">
    <property type="nucleotide sequence ID" value="NM_001084377.1"/>
</dbReference>
<dbReference type="RefSeq" id="NP_178042.1">
    <property type="nucleotide sequence ID" value="NM_106572.6"/>
</dbReference>
<dbReference type="SMR" id="Q8L4A7"/>
<dbReference type="BioGRID" id="29481">
    <property type="interactions" value="72"/>
</dbReference>
<dbReference type="FunCoup" id="Q8L4A7">
    <property type="interactions" value="4406"/>
</dbReference>
<dbReference type="STRING" id="3702.Q8L4A7"/>
<dbReference type="MEROPS" id="T01.972"/>
<dbReference type="iPTMnet" id="Q8L4A7"/>
<dbReference type="PaxDb" id="3702-AT1G79210.2"/>
<dbReference type="ProteomicsDB" id="226485"/>
<dbReference type="EnsemblPlants" id="AT1G79210.1">
    <property type="protein sequence ID" value="AT1G79210.1"/>
    <property type="gene ID" value="AT1G79210"/>
</dbReference>
<dbReference type="EnsemblPlants" id="AT1G79210.2">
    <property type="protein sequence ID" value="AT1G79210.2"/>
    <property type="gene ID" value="AT1G79210"/>
</dbReference>
<dbReference type="EnsemblPlants" id="AT1G79210.3">
    <property type="protein sequence ID" value="AT1G79210.3"/>
    <property type="gene ID" value="AT1G79210"/>
</dbReference>
<dbReference type="GeneID" id="844262"/>
<dbReference type="Gramene" id="AT1G79210.1">
    <property type="protein sequence ID" value="AT1G79210.1"/>
    <property type="gene ID" value="AT1G79210"/>
</dbReference>
<dbReference type="Gramene" id="AT1G79210.2">
    <property type="protein sequence ID" value="AT1G79210.2"/>
    <property type="gene ID" value="AT1G79210"/>
</dbReference>
<dbReference type="Gramene" id="AT1G79210.3">
    <property type="protein sequence ID" value="AT1G79210.3"/>
    <property type="gene ID" value="AT1G79210"/>
</dbReference>
<dbReference type="KEGG" id="ath:AT1G79210"/>
<dbReference type="Araport" id="AT1G79210"/>
<dbReference type="TAIR" id="AT1G79210"/>
<dbReference type="eggNOG" id="KOG0181">
    <property type="taxonomic scope" value="Eukaryota"/>
</dbReference>
<dbReference type="HOGENOM" id="CLU_035750_4_1_1"/>
<dbReference type="InParanoid" id="Q8L4A7"/>
<dbReference type="OMA" id="WKACANG"/>
<dbReference type="OrthoDB" id="1067729at2759"/>
<dbReference type="PhylomeDB" id="Q8L4A7"/>
<dbReference type="CD-CODE" id="24475C75">
    <property type="entry name" value="Stress granule"/>
</dbReference>
<dbReference type="PRO" id="PR:Q8L4A7"/>
<dbReference type="Proteomes" id="UP000006548">
    <property type="component" value="Chromosome 1"/>
</dbReference>
<dbReference type="ExpressionAtlas" id="Q8L4A7">
    <property type="expression patterns" value="baseline and differential"/>
</dbReference>
<dbReference type="GO" id="GO:0005829">
    <property type="term" value="C:cytosol"/>
    <property type="evidence" value="ECO:0007005"/>
    <property type="project" value="TAIR"/>
</dbReference>
<dbReference type="GO" id="GO:0005739">
    <property type="term" value="C:mitochondrion"/>
    <property type="evidence" value="ECO:0007005"/>
    <property type="project" value="TAIR"/>
</dbReference>
<dbReference type="GO" id="GO:0005634">
    <property type="term" value="C:nucleus"/>
    <property type="evidence" value="ECO:0007669"/>
    <property type="project" value="UniProtKB-SubCell"/>
</dbReference>
<dbReference type="GO" id="GO:0000502">
    <property type="term" value="C:proteasome complex"/>
    <property type="evidence" value="ECO:0000314"/>
    <property type="project" value="TAIR"/>
</dbReference>
<dbReference type="GO" id="GO:0019773">
    <property type="term" value="C:proteasome core complex, alpha-subunit complex"/>
    <property type="evidence" value="ECO:0000250"/>
    <property type="project" value="UniProtKB"/>
</dbReference>
<dbReference type="GO" id="GO:0006511">
    <property type="term" value="P:ubiquitin-dependent protein catabolic process"/>
    <property type="evidence" value="ECO:0007669"/>
    <property type="project" value="InterPro"/>
</dbReference>
<dbReference type="CDD" id="cd03750">
    <property type="entry name" value="proteasome_alpha_type_2"/>
    <property type="match status" value="1"/>
</dbReference>
<dbReference type="FunFam" id="3.60.20.10:FF:000028">
    <property type="entry name" value="Proteasome subunit alpha type"/>
    <property type="match status" value="1"/>
</dbReference>
<dbReference type="Gene3D" id="3.60.20.10">
    <property type="entry name" value="Glutamine Phosphoribosylpyrophosphate, subunit 1, domain 1"/>
    <property type="match status" value="1"/>
</dbReference>
<dbReference type="InterPro" id="IPR029055">
    <property type="entry name" value="Ntn_hydrolases_N"/>
</dbReference>
<dbReference type="InterPro" id="IPR050115">
    <property type="entry name" value="Proteasome_alpha"/>
</dbReference>
<dbReference type="InterPro" id="IPR023332">
    <property type="entry name" value="Proteasome_alpha-type"/>
</dbReference>
<dbReference type="InterPro" id="IPR000426">
    <property type="entry name" value="Proteasome_asu_N"/>
</dbReference>
<dbReference type="InterPro" id="IPR001353">
    <property type="entry name" value="Proteasome_sua/b"/>
</dbReference>
<dbReference type="NCBIfam" id="NF003075">
    <property type="entry name" value="PRK03996.1"/>
    <property type="match status" value="1"/>
</dbReference>
<dbReference type="PANTHER" id="PTHR11599">
    <property type="entry name" value="PROTEASOME SUBUNIT ALPHA/BETA"/>
    <property type="match status" value="1"/>
</dbReference>
<dbReference type="Pfam" id="PF00227">
    <property type="entry name" value="Proteasome"/>
    <property type="match status" value="1"/>
</dbReference>
<dbReference type="Pfam" id="PF10584">
    <property type="entry name" value="Proteasome_A_N"/>
    <property type="match status" value="1"/>
</dbReference>
<dbReference type="SMART" id="SM00948">
    <property type="entry name" value="Proteasome_A_N"/>
    <property type="match status" value="1"/>
</dbReference>
<dbReference type="SUPFAM" id="SSF56235">
    <property type="entry name" value="N-terminal nucleophile aminohydrolases (Ntn hydrolases)"/>
    <property type="match status" value="1"/>
</dbReference>
<dbReference type="PROSITE" id="PS00388">
    <property type="entry name" value="PROTEASOME_ALPHA_1"/>
    <property type="match status" value="1"/>
</dbReference>
<dbReference type="PROSITE" id="PS51475">
    <property type="entry name" value="PROTEASOME_ALPHA_2"/>
    <property type="match status" value="1"/>
</dbReference>
<accession>Q8L4A7</accession>
<accession>O64532</accession>
<reference key="1">
    <citation type="journal article" date="2000" name="Nature">
        <title>Sequence and analysis of chromosome 1 of the plant Arabidopsis thaliana.</title>
        <authorList>
            <person name="Theologis A."/>
            <person name="Ecker J.R."/>
            <person name="Palm C.J."/>
            <person name="Federspiel N.A."/>
            <person name="Kaul S."/>
            <person name="White O."/>
            <person name="Alonso J."/>
            <person name="Altafi H."/>
            <person name="Araujo R."/>
            <person name="Bowman C.L."/>
            <person name="Brooks S.Y."/>
            <person name="Buehler E."/>
            <person name="Chan A."/>
            <person name="Chao Q."/>
            <person name="Chen H."/>
            <person name="Cheuk R.F."/>
            <person name="Chin C.W."/>
            <person name="Chung M.K."/>
            <person name="Conn L."/>
            <person name="Conway A.B."/>
            <person name="Conway A.R."/>
            <person name="Creasy T.H."/>
            <person name="Dewar K."/>
            <person name="Dunn P."/>
            <person name="Etgu P."/>
            <person name="Feldblyum T.V."/>
            <person name="Feng J.-D."/>
            <person name="Fong B."/>
            <person name="Fujii C.Y."/>
            <person name="Gill J.E."/>
            <person name="Goldsmith A.D."/>
            <person name="Haas B."/>
            <person name="Hansen N.F."/>
            <person name="Hughes B."/>
            <person name="Huizar L."/>
            <person name="Hunter J.L."/>
            <person name="Jenkins J."/>
            <person name="Johnson-Hopson C."/>
            <person name="Khan S."/>
            <person name="Khaykin E."/>
            <person name="Kim C.J."/>
            <person name="Koo H.L."/>
            <person name="Kremenetskaia I."/>
            <person name="Kurtz D.B."/>
            <person name="Kwan A."/>
            <person name="Lam B."/>
            <person name="Langin-Hooper S."/>
            <person name="Lee A."/>
            <person name="Lee J.M."/>
            <person name="Lenz C.A."/>
            <person name="Li J.H."/>
            <person name="Li Y.-P."/>
            <person name="Lin X."/>
            <person name="Liu S.X."/>
            <person name="Liu Z.A."/>
            <person name="Luros J.S."/>
            <person name="Maiti R."/>
            <person name="Marziali A."/>
            <person name="Militscher J."/>
            <person name="Miranda M."/>
            <person name="Nguyen M."/>
            <person name="Nierman W.C."/>
            <person name="Osborne B.I."/>
            <person name="Pai G."/>
            <person name="Peterson J."/>
            <person name="Pham P.K."/>
            <person name="Rizzo M."/>
            <person name="Rooney T."/>
            <person name="Rowley D."/>
            <person name="Sakano H."/>
            <person name="Salzberg S.L."/>
            <person name="Schwartz J.R."/>
            <person name="Shinn P."/>
            <person name="Southwick A.M."/>
            <person name="Sun H."/>
            <person name="Tallon L.J."/>
            <person name="Tambunga G."/>
            <person name="Toriumi M.J."/>
            <person name="Town C.D."/>
            <person name="Utterback T."/>
            <person name="Van Aken S."/>
            <person name="Vaysberg M."/>
            <person name="Vysotskaia V.S."/>
            <person name="Walker M."/>
            <person name="Wu D."/>
            <person name="Yu G."/>
            <person name="Fraser C.M."/>
            <person name="Venter J.C."/>
            <person name="Davis R.W."/>
        </authorList>
    </citation>
    <scope>NUCLEOTIDE SEQUENCE [LARGE SCALE GENOMIC DNA]</scope>
    <source>
        <strain>cv. Columbia</strain>
    </source>
</reference>
<reference key="2">
    <citation type="journal article" date="2017" name="Plant J.">
        <title>Araport11: a complete reannotation of the Arabidopsis thaliana reference genome.</title>
        <authorList>
            <person name="Cheng C.Y."/>
            <person name="Krishnakumar V."/>
            <person name="Chan A.P."/>
            <person name="Thibaud-Nissen F."/>
            <person name="Schobel S."/>
            <person name="Town C.D."/>
        </authorList>
    </citation>
    <scope>GENOME REANNOTATION</scope>
    <source>
        <strain>cv. Columbia</strain>
    </source>
</reference>
<reference key="3">
    <citation type="journal article" date="2003" name="Science">
        <title>Empirical analysis of transcriptional activity in the Arabidopsis genome.</title>
        <authorList>
            <person name="Yamada K."/>
            <person name="Lim J."/>
            <person name="Dale J.M."/>
            <person name="Chen H."/>
            <person name="Shinn P."/>
            <person name="Palm C.J."/>
            <person name="Southwick A.M."/>
            <person name="Wu H.C."/>
            <person name="Kim C.J."/>
            <person name="Nguyen M."/>
            <person name="Pham P.K."/>
            <person name="Cheuk R.F."/>
            <person name="Karlin-Newmann G."/>
            <person name="Liu S.X."/>
            <person name="Lam B."/>
            <person name="Sakano H."/>
            <person name="Wu T."/>
            <person name="Yu G."/>
            <person name="Miranda M."/>
            <person name="Quach H.L."/>
            <person name="Tripp M."/>
            <person name="Chang C.H."/>
            <person name="Lee J.M."/>
            <person name="Toriumi M.J."/>
            <person name="Chan M.M."/>
            <person name="Tang C.C."/>
            <person name="Onodera C.S."/>
            <person name="Deng J.M."/>
            <person name="Akiyama K."/>
            <person name="Ansari Y."/>
            <person name="Arakawa T."/>
            <person name="Banh J."/>
            <person name="Banno F."/>
            <person name="Bowser L."/>
            <person name="Brooks S.Y."/>
            <person name="Carninci P."/>
            <person name="Chao Q."/>
            <person name="Choy N."/>
            <person name="Enju A."/>
            <person name="Goldsmith A.D."/>
            <person name="Gurjal M."/>
            <person name="Hansen N.F."/>
            <person name="Hayashizaki Y."/>
            <person name="Johnson-Hopson C."/>
            <person name="Hsuan V.W."/>
            <person name="Iida K."/>
            <person name="Karnes M."/>
            <person name="Khan S."/>
            <person name="Koesema E."/>
            <person name="Ishida J."/>
            <person name="Jiang P.X."/>
            <person name="Jones T."/>
            <person name="Kawai J."/>
            <person name="Kamiya A."/>
            <person name="Meyers C."/>
            <person name="Nakajima M."/>
            <person name="Narusaka M."/>
            <person name="Seki M."/>
            <person name="Sakurai T."/>
            <person name="Satou M."/>
            <person name="Tamse R."/>
            <person name="Vaysberg M."/>
            <person name="Wallender E.K."/>
            <person name="Wong C."/>
            <person name="Yamamura Y."/>
            <person name="Yuan S."/>
            <person name="Shinozaki K."/>
            <person name="Davis R.W."/>
            <person name="Theologis A."/>
            <person name="Ecker J.R."/>
        </authorList>
    </citation>
    <scope>NUCLEOTIDE SEQUENCE [LARGE SCALE MRNA]</scope>
    <source>
        <strain>cv. Columbia</strain>
    </source>
</reference>
<reference key="4">
    <citation type="journal article" date="1998" name="Genetics">
        <title>Molecular organization of the 20S proteasome gene family from Arabidopsis thaliana.</title>
        <authorList>
            <person name="Fu H."/>
            <person name="Doelling J.H."/>
            <person name="Arendt C.S."/>
            <person name="Hochstrasser M."/>
            <person name="Vierstra R.D."/>
        </authorList>
    </citation>
    <scope>GENE FAMILY</scope>
    <scope>NOMENCLATURE</scope>
</reference>
<reference key="5">
    <citation type="journal article" date="1999" name="Mol. Biol. Rep.">
        <title>Structure and functional analyses of the 26S proteasome subunits from plants.</title>
        <authorList>
            <person name="Fu H."/>
            <person name="Girod P.-A."/>
            <person name="Doelling J.H."/>
            <person name="van Nocker S."/>
            <person name="Hochstrasser M."/>
            <person name="Finley D."/>
            <person name="Vierstra R.D."/>
        </authorList>
    </citation>
    <scope>SUBUNIT</scope>
</reference>
<reference key="6">
    <citation type="journal article" date="2004" name="J. Biol. Chem.">
        <title>Purification of the Arabidopsis 26 S proteasome: biochemical and molecular analyses revealed the presence of multiple isoforms.</title>
        <authorList>
            <person name="Yang P."/>
            <person name="Fu H."/>
            <person name="Walker J."/>
            <person name="Papa C.M."/>
            <person name="Smalle J."/>
            <person name="Ju Y.-M."/>
            <person name="Vierstra R.D."/>
        </authorList>
    </citation>
    <scope>SUBUNIT</scope>
    <scope>IDENTIFICATION BY MASS SPECTROMETRY</scope>
</reference>
<reference key="7">
    <citation type="journal article" date="2010" name="J. Biol. Chem.">
        <title>Affinity purification of the Arabidopsis 26 S proteasome reveals a diverse array of plant proteolytic complexes.</title>
        <authorList>
            <person name="Book A.J."/>
            <person name="Gladman N.P."/>
            <person name="Lee S.S."/>
            <person name="Scalf M."/>
            <person name="Smith L.M."/>
            <person name="Vierstra R.D."/>
        </authorList>
    </citation>
    <scope>IDENTIFICATION BY MASS SPECTROMETRY</scope>
    <scope>CHARACTERIZATION OF THE 26S PROTEASOME COMPLEX</scope>
    <scope>SUBUNIT</scope>
</reference>
<comment type="function">
    <text>The proteasome is a multicatalytic proteinase complex which is characterized by its ability to cleave peptides with Arg, Phe, Tyr, Leu, and Glu adjacent to the leaving group at neutral or slightly basic pH. The proteasome has an ATP-dependent proteolytic activity.</text>
</comment>
<comment type="subunit">
    <text evidence="4 5 6">Component of the 20S core complex of the 26S proteasome. The 26S proteasome is composed of a core protease (CP), known as the 20S proteasome, capped at one or both ends by the 19S regulatory particle (RP/PA700). The 20S proteasome core is composed of 28 subunits that are arranged in four stacked rings, resulting in a barrel-shaped structure. The two end rings are each formed by seven alpha subunits, and the two central rings are each formed by seven beta subunits. The catalytic chamber with the active sites is on the inside of the barrel.</text>
</comment>
<comment type="subcellular location">
    <subcellularLocation>
        <location evidence="1">Cytoplasm</location>
    </subcellularLocation>
    <subcellularLocation>
        <location evidence="1">Nucleus</location>
    </subcellularLocation>
</comment>
<comment type="similarity">
    <text evidence="3">Belongs to the peptidase T1A family.</text>
</comment>
<comment type="sequence caution" evidence="7">
    <conflict type="erroneous gene model prediction">
        <sequence resource="EMBL-CDS" id="AAC17043"/>
    </conflict>
</comment>
<organism>
    <name type="scientific">Arabidopsis thaliana</name>
    <name type="common">Mouse-ear cress</name>
    <dbReference type="NCBI Taxonomy" id="3702"/>
    <lineage>
        <taxon>Eukaryota</taxon>
        <taxon>Viridiplantae</taxon>
        <taxon>Streptophyta</taxon>
        <taxon>Embryophyta</taxon>
        <taxon>Tracheophyta</taxon>
        <taxon>Spermatophyta</taxon>
        <taxon>Magnoliopsida</taxon>
        <taxon>eudicotyledons</taxon>
        <taxon>Gunneridae</taxon>
        <taxon>Pentapetalae</taxon>
        <taxon>rosids</taxon>
        <taxon>malvids</taxon>
        <taxon>Brassicales</taxon>
        <taxon>Brassicaceae</taxon>
        <taxon>Camelineae</taxon>
        <taxon>Arabidopsis</taxon>
    </lineage>
</organism>
<gene>
    <name type="primary">PAB2</name>
    <name type="ordered locus">At1g79210</name>
    <name type="ORF">YUP8H12R.19</name>
</gene>